<keyword id="KW-0002">3D-structure</keyword>
<keyword id="KW-0007">Acetylation</keyword>
<keyword id="KW-0010">Activator</keyword>
<keyword id="KW-0025">Alternative splicing</keyword>
<keyword id="KW-0903">Direct protein sequencing</keyword>
<keyword id="KW-1017">Isopeptide bond</keyword>
<keyword id="KW-0488">Methylation</keyword>
<keyword id="KW-0507">mRNA processing</keyword>
<keyword id="KW-0508">mRNA splicing</keyword>
<keyword id="KW-0539">Nucleus</keyword>
<keyword id="KW-0597">Phosphoprotein</keyword>
<keyword id="KW-1267">Proteomics identification</keyword>
<keyword id="KW-1185">Reference proteome</keyword>
<keyword id="KW-0678">Repressor</keyword>
<keyword id="KW-0694">RNA-binding</keyword>
<keyword id="KW-0832">Ubl conjugation</keyword>
<reference key="1">
    <citation type="journal article" date="1997" name="DNA Cell Biol.">
        <title>Molecular cloning of htra2-beta-1 and htra2-beta-2, two human homologs of tra-2 generated by alternative splicing.</title>
        <authorList>
            <person name="Beil B."/>
            <person name="Screaton G."/>
            <person name="Stamm S."/>
        </authorList>
    </citation>
    <scope>NUCLEOTIDE SEQUENCE [GENOMIC DNA / MRNA] (ISOFORMS 1 AND 2)</scope>
    <scope>SUBCELLULAR LOCATION</scope>
    <source>
        <tissue>Cervix carcinoma</tissue>
    </source>
</reference>
<reference key="2">
    <citation type="journal article" date="1998" name="Genomics">
        <title>Human transformer-2-beta gene (SFRS10): complete nucleotide sequence, chromosomal localization, and generation of a tissue-specific isoform.</title>
        <authorList>
            <person name="Nayler O."/>
            <person name="Cap C."/>
            <person name="Stamm S."/>
        </authorList>
    </citation>
    <scope>NUCLEOTIDE SEQUENCE [GENOMIC DNA] (ISOFORM 3)</scope>
    <scope>TISSUE SPECIFICITY</scope>
</reference>
<reference key="3">
    <citation type="submission" date="1996-09" db="EMBL/GenBank/DDBJ databases">
        <title>The human transformer-2 beta gene is a functional homologue of the D. melanogaster sex determination factor transformer-2.</title>
        <authorList>
            <person name="Dauwalder B."/>
            <person name="Manzanares F.A."/>
            <person name="Mattox W."/>
        </authorList>
    </citation>
    <scope>NUCLEOTIDE SEQUENCE [MRNA] (ISOFORM 1)</scope>
    <source>
        <tissue>Brain</tissue>
    </source>
</reference>
<reference key="4">
    <citation type="journal article" date="2004" name="Nat. Genet.">
        <title>Complete sequencing and characterization of 21,243 full-length human cDNAs.</title>
        <authorList>
            <person name="Ota T."/>
            <person name="Suzuki Y."/>
            <person name="Nishikawa T."/>
            <person name="Otsuki T."/>
            <person name="Sugiyama T."/>
            <person name="Irie R."/>
            <person name="Wakamatsu A."/>
            <person name="Hayashi K."/>
            <person name="Sato H."/>
            <person name="Nagai K."/>
            <person name="Kimura K."/>
            <person name="Makita H."/>
            <person name="Sekine M."/>
            <person name="Obayashi M."/>
            <person name="Nishi T."/>
            <person name="Shibahara T."/>
            <person name="Tanaka T."/>
            <person name="Ishii S."/>
            <person name="Yamamoto J."/>
            <person name="Saito K."/>
            <person name="Kawai Y."/>
            <person name="Isono Y."/>
            <person name="Nakamura Y."/>
            <person name="Nagahari K."/>
            <person name="Murakami K."/>
            <person name="Yasuda T."/>
            <person name="Iwayanagi T."/>
            <person name="Wagatsuma M."/>
            <person name="Shiratori A."/>
            <person name="Sudo H."/>
            <person name="Hosoiri T."/>
            <person name="Kaku Y."/>
            <person name="Kodaira H."/>
            <person name="Kondo H."/>
            <person name="Sugawara M."/>
            <person name="Takahashi M."/>
            <person name="Kanda K."/>
            <person name="Yokoi T."/>
            <person name="Furuya T."/>
            <person name="Kikkawa E."/>
            <person name="Omura Y."/>
            <person name="Abe K."/>
            <person name="Kamihara K."/>
            <person name="Katsuta N."/>
            <person name="Sato K."/>
            <person name="Tanikawa M."/>
            <person name="Yamazaki M."/>
            <person name="Ninomiya K."/>
            <person name="Ishibashi T."/>
            <person name="Yamashita H."/>
            <person name="Murakawa K."/>
            <person name="Fujimori K."/>
            <person name="Tanai H."/>
            <person name="Kimata M."/>
            <person name="Watanabe M."/>
            <person name="Hiraoka S."/>
            <person name="Chiba Y."/>
            <person name="Ishida S."/>
            <person name="Ono Y."/>
            <person name="Takiguchi S."/>
            <person name="Watanabe S."/>
            <person name="Yosida M."/>
            <person name="Hotuta T."/>
            <person name="Kusano J."/>
            <person name="Kanehori K."/>
            <person name="Takahashi-Fujii A."/>
            <person name="Hara H."/>
            <person name="Tanase T.-O."/>
            <person name="Nomura Y."/>
            <person name="Togiya S."/>
            <person name="Komai F."/>
            <person name="Hara R."/>
            <person name="Takeuchi K."/>
            <person name="Arita M."/>
            <person name="Imose N."/>
            <person name="Musashino K."/>
            <person name="Yuuki H."/>
            <person name="Oshima A."/>
            <person name="Sasaki N."/>
            <person name="Aotsuka S."/>
            <person name="Yoshikawa Y."/>
            <person name="Matsunawa H."/>
            <person name="Ichihara T."/>
            <person name="Shiohata N."/>
            <person name="Sano S."/>
            <person name="Moriya S."/>
            <person name="Momiyama H."/>
            <person name="Satoh N."/>
            <person name="Takami S."/>
            <person name="Terashima Y."/>
            <person name="Suzuki O."/>
            <person name="Nakagawa S."/>
            <person name="Senoh A."/>
            <person name="Mizoguchi H."/>
            <person name="Goto Y."/>
            <person name="Shimizu F."/>
            <person name="Wakebe H."/>
            <person name="Hishigaki H."/>
            <person name="Watanabe T."/>
            <person name="Sugiyama A."/>
            <person name="Takemoto M."/>
            <person name="Kawakami B."/>
            <person name="Yamazaki M."/>
            <person name="Watanabe K."/>
            <person name="Kumagai A."/>
            <person name="Itakura S."/>
            <person name="Fukuzumi Y."/>
            <person name="Fujimori Y."/>
            <person name="Komiyama M."/>
            <person name="Tashiro H."/>
            <person name="Tanigami A."/>
            <person name="Fujiwara T."/>
            <person name="Ono T."/>
            <person name="Yamada K."/>
            <person name="Fujii Y."/>
            <person name="Ozaki K."/>
            <person name="Hirao M."/>
            <person name="Ohmori Y."/>
            <person name="Kawabata A."/>
            <person name="Hikiji T."/>
            <person name="Kobatake N."/>
            <person name="Inagaki H."/>
            <person name="Ikema Y."/>
            <person name="Okamoto S."/>
            <person name="Okitani R."/>
            <person name="Kawakami T."/>
            <person name="Noguchi S."/>
            <person name="Itoh T."/>
            <person name="Shigeta K."/>
            <person name="Senba T."/>
            <person name="Matsumura K."/>
            <person name="Nakajima Y."/>
            <person name="Mizuno T."/>
            <person name="Morinaga M."/>
            <person name="Sasaki M."/>
            <person name="Togashi T."/>
            <person name="Oyama M."/>
            <person name="Hata H."/>
            <person name="Watanabe M."/>
            <person name="Komatsu T."/>
            <person name="Mizushima-Sugano J."/>
            <person name="Satoh T."/>
            <person name="Shirai Y."/>
            <person name="Takahashi Y."/>
            <person name="Nakagawa K."/>
            <person name="Okumura K."/>
            <person name="Nagase T."/>
            <person name="Nomura N."/>
            <person name="Kikuchi H."/>
            <person name="Masuho Y."/>
            <person name="Yamashita R."/>
            <person name="Nakai K."/>
            <person name="Yada T."/>
            <person name="Nakamura Y."/>
            <person name="Ohara O."/>
            <person name="Isogai T."/>
            <person name="Sugano S."/>
        </authorList>
    </citation>
    <scope>NUCLEOTIDE SEQUENCE [LARGE SCALE MRNA] (ISOFORM 3)</scope>
    <source>
        <tissue>Spleen</tissue>
    </source>
</reference>
<reference key="5">
    <citation type="submission" date="2005-09" db="EMBL/GenBank/DDBJ databases">
        <authorList>
            <person name="Mural R.J."/>
            <person name="Istrail S."/>
            <person name="Sutton G.G."/>
            <person name="Florea L."/>
            <person name="Halpern A.L."/>
            <person name="Mobarry C.M."/>
            <person name="Lippert R."/>
            <person name="Walenz B."/>
            <person name="Shatkay H."/>
            <person name="Dew I."/>
            <person name="Miller J.R."/>
            <person name="Flanigan M.J."/>
            <person name="Edwards N.J."/>
            <person name="Bolanos R."/>
            <person name="Fasulo D."/>
            <person name="Halldorsson B.V."/>
            <person name="Hannenhalli S."/>
            <person name="Turner R."/>
            <person name="Yooseph S."/>
            <person name="Lu F."/>
            <person name="Nusskern D.R."/>
            <person name="Shue B.C."/>
            <person name="Zheng X.H."/>
            <person name="Zhong F."/>
            <person name="Delcher A.L."/>
            <person name="Huson D.H."/>
            <person name="Kravitz S.A."/>
            <person name="Mouchard L."/>
            <person name="Reinert K."/>
            <person name="Remington K.A."/>
            <person name="Clark A.G."/>
            <person name="Waterman M.S."/>
            <person name="Eichler E.E."/>
            <person name="Adams M.D."/>
            <person name="Hunkapiller M.W."/>
            <person name="Myers E.W."/>
            <person name="Venter J.C."/>
        </authorList>
    </citation>
    <scope>NUCLEOTIDE SEQUENCE [LARGE SCALE GENOMIC DNA]</scope>
</reference>
<reference key="6">
    <citation type="journal article" date="2004" name="Genome Res.">
        <title>The status, quality, and expansion of the NIH full-length cDNA project: the Mammalian Gene Collection (MGC).</title>
        <authorList>
            <consortium name="The MGC Project Team"/>
        </authorList>
    </citation>
    <scope>NUCLEOTIDE SEQUENCE [LARGE SCALE MRNA] (ISOFORM 1)</scope>
    <source>
        <tissue>Lung</tissue>
        <tissue>Placenta</tissue>
        <tissue>Skin</tissue>
    </source>
</reference>
<reference key="7">
    <citation type="submission" date="2008-12" db="UniProtKB">
        <authorList>
            <person name="Bienvenut W.V."/>
            <person name="Lilla S."/>
            <person name="von Kriegsheim A."/>
            <person name="Lempens A."/>
            <person name="Kolch W."/>
        </authorList>
    </citation>
    <scope>PROTEIN SEQUENCE OF 141-156; 160-173; 179-187; 189-210 AND 229-251</scope>
    <scope>METHYLATION AT ARG-241</scope>
    <scope>IDENTIFICATION BY MASS SPECTROMETRY</scope>
    <source>
        <tissue>Ovarian carcinoma</tissue>
    </source>
</reference>
<reference key="8">
    <citation type="journal article" date="1998" name="Cell">
        <title>Human Tra2 proteins are sequence-specific activators of pre-mRNA splicing.</title>
        <authorList>
            <person name="Tacke R."/>
            <person name="Tohyama M."/>
            <person name="Ogawa S."/>
            <person name="Manley J.L."/>
        </authorList>
    </citation>
    <scope>FUNCTION</scope>
    <scope>SUBCELLULAR LOCATION</scope>
    <scope>PHOSPHORYLATION</scope>
    <source>
        <tissue>Cervix carcinoma</tissue>
    </source>
</reference>
<reference key="9">
    <citation type="journal article" date="1999" name="Proc. Natl. Acad. Sci. U.S.A.">
        <title>The SRm160/300 splicing coactivator is required for exon-enhancer function.</title>
        <authorList>
            <person name="Eldridge A.G."/>
            <person name="Li Y."/>
            <person name="Sharp P.A."/>
            <person name="Blencowe B.J."/>
        </authorList>
    </citation>
    <scope>IDENTIFICATION IN A MRNA EXONIC SPLICING ENHANCER (ESE) COMPLEX WITH SNRNP70; SNRPA1 AND SRRM1</scope>
</reference>
<reference key="10">
    <citation type="journal article" date="2000" name="Hum. Mol. Genet.">
        <title>RBMY, a probable human spermatogenesis factor, and other hnRNP G proteins interact with Tra2beta and affect splicing.</title>
        <authorList>
            <person name="Venables J.P."/>
            <person name="Elliott D.J."/>
            <person name="Makarova O.V."/>
            <person name="Makarov E.M."/>
            <person name="Cooke H.J."/>
            <person name="Eperon E.C."/>
        </authorList>
    </citation>
    <scope>INTERACTION WITH RBMY1A1</scope>
</reference>
<reference key="11">
    <citation type="journal article" date="2002" name="Hum. Mol. Genet.">
        <title>hnRNP-G promotes exon 7 inclusion of survival motor neuron (SMN) via direct interaction with Htra2-beta1.</title>
        <authorList>
            <person name="Hofmann Y."/>
            <person name="Wirth B."/>
        </authorList>
    </citation>
    <scope>FUNCTION</scope>
    <scope>INTERACTION WITH RBMX</scope>
    <scope>RNA-BINDING</scope>
</reference>
<reference key="12">
    <citation type="journal article" date="2003" name="Hum. Mol. Genet.">
        <title>HnRNP G and Tra2beta: opposite effects on splicing matched by antagonism in RNA binding.</title>
        <authorList>
            <person name="Nasim M.T."/>
            <person name="Chernova T.K."/>
            <person name="Chowdhury H.M."/>
            <person name="Yue B.G."/>
            <person name="Eperon I.C."/>
        </authorList>
    </citation>
    <scope>FUNCTION</scope>
    <scope>RNA-BINDING</scope>
</reference>
<reference key="13">
    <citation type="journal article" date="2003" name="Nature">
        <title>Proteomic characterization of the human centrosome by protein correlation profiling.</title>
        <authorList>
            <person name="Andersen J.S."/>
            <person name="Wilkinson C.J."/>
            <person name="Mayor T."/>
            <person name="Mortensen P."/>
            <person name="Nigg E.A."/>
            <person name="Mann M."/>
        </authorList>
    </citation>
    <scope>IDENTIFICATION BY MASS SPECTROMETRY</scope>
    <source>
        <tissue>Lymphoblast</tissue>
    </source>
</reference>
<reference key="14">
    <citation type="journal article" date="2004" name="J. Neurochem.">
        <title>Tau exon 10, whose missplicing causes frontotemporal dementia, is regulated by an intricate interplay of cis elements and trans factors.</title>
        <authorList>
            <person name="Wang J."/>
            <person name="Gao Q.S."/>
            <person name="Wang Y."/>
            <person name="Lafyatis R."/>
            <person name="Stamm S."/>
            <person name="Andreadis A."/>
        </authorList>
    </citation>
    <scope>FUNCTION</scope>
</reference>
<reference key="15">
    <citation type="journal article" date="2004" name="J. Biol. Chem.">
        <title>Distinct sequence motifs within the 68-kDa subunit of cleavage factor Im mediate RNA binding, protein-protein interactions, and subcellular localization.</title>
        <authorList>
            <person name="Dettwiler S."/>
            <person name="Aringhieri C."/>
            <person name="Cardinale S."/>
            <person name="Keller W."/>
            <person name="Barabino S.M."/>
        </authorList>
    </citation>
    <scope>INTERACTION WITH CPSF6</scope>
</reference>
<reference key="16">
    <citation type="journal article" date="2004" name="Mol. Cell. Biol.">
        <title>Human RNPS1 and its associated factors: a versatile alternative pre-mRNA splicing regulator in vivo.</title>
        <authorList>
            <person name="Sakashita E."/>
            <person name="Tatsumi S."/>
            <person name="Werner D."/>
            <person name="Endo H."/>
            <person name="Mayeda A."/>
        </authorList>
    </citation>
    <scope>INTERACTION WITH RNPS1</scope>
</reference>
<reference key="17">
    <citation type="journal article" date="2004" name="Nat. Methods">
        <title>Identifying and quantifying in vivo methylation sites by heavy methyl SILAC.</title>
        <authorList>
            <person name="Ong S.E."/>
            <person name="Mittler G."/>
            <person name="Mann M."/>
        </authorList>
    </citation>
    <scope>METHYLATION [LARGE SCALE ANALYSIS] AT ARG-241</scope>
    <scope>IDENTIFICATION BY MASS SPECTROMETRY [LARGE SCALE ANALYSIS]</scope>
    <source>
        <tissue>Cervix carcinoma</tissue>
    </source>
</reference>
<reference key="18">
    <citation type="journal article" date="2004" name="Nature">
        <title>Dephosphorylated SRp38 acts as a splicing repressor in response to heat shock.</title>
        <authorList>
            <person name="Shin C."/>
            <person name="Feng Y."/>
            <person name="Manley J.L."/>
        </authorList>
    </citation>
    <scope>INTERACTION WITH SFRS13A</scope>
</reference>
<reference key="19">
    <citation type="journal article" date="2006" name="Cell">
        <title>Global, in vivo, and site-specific phosphorylation dynamics in signaling networks.</title>
        <authorList>
            <person name="Olsen J.V."/>
            <person name="Blagoev B."/>
            <person name="Gnad F."/>
            <person name="Macek B."/>
            <person name="Kumar C."/>
            <person name="Mortensen P."/>
            <person name="Mann M."/>
        </authorList>
    </citation>
    <scope>IDENTIFICATION BY MASS SPECTROMETRY [LARGE SCALE ANALYSIS]</scope>
    <source>
        <tissue>Cervix carcinoma</tissue>
    </source>
</reference>
<reference key="20">
    <citation type="journal article" date="2008" name="Proc. Natl. Acad. Sci. U.S.A.">
        <title>A quantitative atlas of mitotic phosphorylation.</title>
        <authorList>
            <person name="Dephoure N."/>
            <person name="Zhou C."/>
            <person name="Villen J."/>
            <person name="Beausoleil S.A."/>
            <person name="Bakalarski C.E."/>
            <person name="Elledge S.J."/>
            <person name="Gygi S.P."/>
        </authorList>
    </citation>
    <scope>PHOSPHORYLATION [LARGE SCALE ANALYSIS] AT SER-83 AND THR-201</scope>
    <scope>IDENTIFICATION BY MASS SPECTROMETRY [LARGE SCALE ANALYSIS]</scope>
    <source>
        <tissue>Cervix carcinoma</tissue>
    </source>
</reference>
<reference key="21">
    <citation type="journal article" date="2009" name="J. Biol. Chem.">
        <title>Heterogeneous nuclear ribonucleoprotein G regulates splice site selection by binding to CC(A/C)-rich regions in pre-mRNA.</title>
        <authorList>
            <person name="Heinrich B."/>
            <person name="Zhang Z."/>
            <person name="Raitskin O."/>
            <person name="Hiller M."/>
            <person name="Benderska N."/>
            <person name="Hartmann A.M."/>
            <person name="Bracco L."/>
            <person name="Elliott D."/>
            <person name="Ben-Ari S."/>
            <person name="Soreq H."/>
            <person name="Sperling J."/>
            <person name="Sperling R."/>
            <person name="Stamm S."/>
        </authorList>
    </citation>
    <scope>INTERACTION WITH RBMX</scope>
</reference>
<reference key="22">
    <citation type="journal article" date="2010" name="Sci. Signal.">
        <title>Quantitative phosphoproteomics reveals widespread full phosphorylation site occupancy during mitosis.</title>
        <authorList>
            <person name="Olsen J.V."/>
            <person name="Vermeulen M."/>
            <person name="Santamaria A."/>
            <person name="Kumar C."/>
            <person name="Miller M.L."/>
            <person name="Jensen L.J."/>
            <person name="Gnad F."/>
            <person name="Cox J."/>
            <person name="Jensen T.S."/>
            <person name="Nigg E.A."/>
            <person name="Brunak S."/>
            <person name="Mann M."/>
        </authorList>
    </citation>
    <scope>ACETYLATION [LARGE SCALE ANALYSIS] AT SER-2</scope>
    <scope>PHOSPHORYLATION [LARGE SCALE ANALYSIS] AT SER-2; SER-14; SER-95; SER-97; SER-99; THR-103; THR-201 AND THR-203</scope>
    <scope>CLEAVAGE OF INITIATOR METHIONINE [LARGE SCALE ANALYSIS]</scope>
    <scope>IDENTIFICATION BY MASS SPECTROMETRY [LARGE SCALE ANALYSIS]</scope>
    <source>
        <tissue>Cervix carcinoma</tissue>
    </source>
</reference>
<reference key="23">
    <citation type="journal article" date="2011" name="BMC Syst. Biol.">
        <title>Initial characterization of the human central proteome.</title>
        <authorList>
            <person name="Burkard T.R."/>
            <person name="Planyavsky M."/>
            <person name="Kaupe I."/>
            <person name="Breitwieser F.P."/>
            <person name="Buerckstuemmer T."/>
            <person name="Bennett K.L."/>
            <person name="Superti-Furga G."/>
            <person name="Colinge J."/>
        </authorList>
    </citation>
    <scope>IDENTIFICATION BY MASS SPECTROMETRY [LARGE SCALE ANALYSIS]</scope>
</reference>
<reference key="24">
    <citation type="journal article" date="2011" name="Sci. Signal.">
        <title>System-wide temporal characterization of the proteome and phosphoproteome of human embryonic stem cell differentiation.</title>
        <authorList>
            <person name="Rigbolt K.T."/>
            <person name="Prokhorova T.A."/>
            <person name="Akimov V."/>
            <person name="Henningsen J."/>
            <person name="Johansen P.T."/>
            <person name="Kratchmarova I."/>
            <person name="Kassem M."/>
            <person name="Mann M."/>
            <person name="Olsen J.V."/>
            <person name="Blagoev B."/>
        </authorList>
    </citation>
    <scope>ACETYLATION [LARGE SCALE ANALYSIS] AT SER-2</scope>
    <scope>PHOSPHORYLATION [LARGE SCALE ANALYSIS] AT SER-2; SER-4; SER-14 AND THR-201</scope>
    <scope>CLEAVAGE OF INITIATOR METHIONINE [LARGE SCALE ANALYSIS]</scope>
    <scope>IDENTIFICATION BY MASS SPECTROMETRY [LARGE SCALE ANALYSIS]</scope>
</reference>
<reference key="25">
    <citation type="journal article" date="2012" name="Proc. Natl. Acad. Sci. U.S.A.">
        <title>N-terminal acetylome analyses and functional insights of the N-terminal acetyltransferase NatB.</title>
        <authorList>
            <person name="Van Damme P."/>
            <person name="Lasa M."/>
            <person name="Polevoda B."/>
            <person name="Gazquez C."/>
            <person name="Elosegui-Artola A."/>
            <person name="Kim D.S."/>
            <person name="De Juan-Pardo E."/>
            <person name="Demeyer K."/>
            <person name="Hole K."/>
            <person name="Larrea E."/>
            <person name="Timmerman E."/>
            <person name="Prieto J."/>
            <person name="Arnesen T."/>
            <person name="Sherman F."/>
            <person name="Gevaert K."/>
            <person name="Aldabe R."/>
        </authorList>
    </citation>
    <scope>ACETYLATION [LARGE SCALE ANALYSIS] AT SER-2</scope>
    <scope>CLEAVAGE OF INITIATOR METHIONINE [LARGE SCALE ANALYSIS]</scope>
    <scope>IDENTIFICATION BY MASS SPECTROMETRY [LARGE SCALE ANALYSIS]</scope>
</reference>
<reference key="26">
    <citation type="journal article" date="2013" name="J. Proteome Res.">
        <title>Toward a comprehensive characterization of a human cancer cell phosphoproteome.</title>
        <authorList>
            <person name="Zhou H."/>
            <person name="Di Palma S."/>
            <person name="Preisinger C."/>
            <person name="Peng M."/>
            <person name="Polat A.N."/>
            <person name="Heck A.J."/>
            <person name="Mohammed S."/>
        </authorList>
    </citation>
    <scope>PHOSPHORYLATION [LARGE SCALE ANALYSIS] AT SER-2; SER-14; SER-83; SER-85; SER-87; THR-201; SER-215 AND SER-237</scope>
    <scope>IDENTIFICATION BY MASS SPECTROMETRY [LARGE SCALE ANALYSIS]</scope>
    <source>
        <tissue>Cervix carcinoma</tissue>
        <tissue>Erythroleukemia</tissue>
    </source>
</reference>
<reference key="27">
    <citation type="journal article" date="2014" name="Mol. Cell. Proteomics">
        <title>Immunoaffinity enrichment and mass spectrometry analysis of protein methylation.</title>
        <authorList>
            <person name="Guo A."/>
            <person name="Gu H."/>
            <person name="Zhou J."/>
            <person name="Mulhern D."/>
            <person name="Wang Y."/>
            <person name="Lee K.A."/>
            <person name="Yang V."/>
            <person name="Aguiar M."/>
            <person name="Kornhauser J."/>
            <person name="Jia X."/>
            <person name="Ren J."/>
            <person name="Beausoleil S.A."/>
            <person name="Silva J.C."/>
            <person name="Vemulapalli V."/>
            <person name="Bedford M.T."/>
            <person name="Comb M.J."/>
        </authorList>
    </citation>
    <scope>METHYLATION [LARGE SCALE ANALYSIS] AT ARG-241</scope>
    <scope>IDENTIFICATION BY MASS SPECTROMETRY [LARGE SCALE ANALYSIS]</scope>
    <source>
        <tissue>Colon carcinoma</tissue>
    </source>
</reference>
<reference key="28">
    <citation type="journal article" date="2017" name="Nat. Struct. Mol. Biol.">
        <title>Site-specific mapping of the human SUMO proteome reveals co-modification with phosphorylation.</title>
        <authorList>
            <person name="Hendriks I.A."/>
            <person name="Lyon D."/>
            <person name="Young C."/>
            <person name="Jensen L.J."/>
            <person name="Vertegaal A.C."/>
            <person name="Nielsen M.L."/>
        </authorList>
    </citation>
    <scope>SUMOYLATION [LARGE SCALE ANALYSIS] AT LYS-197</scope>
    <scope>IDENTIFICATION BY MASS SPECTROMETRY [LARGE SCALE ANALYSIS]</scope>
</reference>
<reference key="29">
    <citation type="submission" date="2005-11" db="PDB data bank">
        <title>Solution structure of the RNA recognition motif in arginine/serine-rich splicing factor 10.</title>
        <authorList>
            <consortium name="RIKEN structural genomics initiative (RSGI)"/>
        </authorList>
    </citation>
    <scope>STRUCTURE BY NMR OF 109-191</scope>
</reference>
<protein>
    <recommendedName>
        <fullName evidence="20">Transformer-2 protein homolog beta</fullName>
        <shortName>TRA-2 beta</shortName>
        <shortName>TRA2-beta</shortName>
        <shortName>hTRA2-beta</shortName>
    </recommendedName>
    <alternativeName>
        <fullName>Splicing factor, arginine/serine-rich 10</fullName>
    </alternativeName>
    <alternativeName>
        <fullName>Transformer-2 protein homolog B</fullName>
    </alternativeName>
</protein>
<gene>
    <name evidence="21" type="primary">TRA2B</name>
    <name type="synonym">SFRS10</name>
</gene>
<sequence length="288" mass="33666">MSDSGEQNYGERESRSASRSGSAHGSGKSARHTPARSRSKEDSRRSRSKSRSRSESRSRSRRSSRRHYTRSRSRSRSHRRSRSRSYSRDYRRRHSHSHSPMSTRRRHVGNRANPDPNCCLGVFGLSLYTTERDLREVFSKYGPIADVSIVYDQQSRRSRGFAFVYFENVDDAKEAKERANGMELDGRRIRVDFSITKRPHTPTPGIYMGRPTYGSSRRRDYYDRGYDRGYDDRDYYSRSYRGGGGGGGGWRAAQDRDQIYRRRSPSPYYSRGGYRSRSRSRSYSPRRY</sequence>
<organism>
    <name type="scientific">Homo sapiens</name>
    <name type="common">Human</name>
    <dbReference type="NCBI Taxonomy" id="9606"/>
    <lineage>
        <taxon>Eukaryota</taxon>
        <taxon>Metazoa</taxon>
        <taxon>Chordata</taxon>
        <taxon>Craniata</taxon>
        <taxon>Vertebrata</taxon>
        <taxon>Euteleostomi</taxon>
        <taxon>Mammalia</taxon>
        <taxon>Eutheria</taxon>
        <taxon>Euarchontoglires</taxon>
        <taxon>Primates</taxon>
        <taxon>Haplorrhini</taxon>
        <taxon>Catarrhini</taxon>
        <taxon>Hominidae</taxon>
        <taxon>Homo</taxon>
    </lineage>
</organism>
<proteinExistence type="evidence at protein level"/>
<dbReference type="EMBL" id="U61267">
    <property type="protein sequence ID" value="AAC28242.1"/>
    <property type="molecule type" value="mRNA"/>
</dbReference>
<dbReference type="EMBL" id="U87836">
    <property type="protein sequence ID" value="AAB69763.1"/>
    <property type="molecule type" value="mRNA"/>
</dbReference>
<dbReference type="EMBL" id="AF057159">
    <property type="protein sequence ID" value="AAD19277.1"/>
    <property type="molecule type" value="Genomic_DNA"/>
</dbReference>
<dbReference type="EMBL" id="AF057159">
    <property type="protein sequence ID" value="AAD19278.1"/>
    <property type="molecule type" value="Genomic_DNA"/>
</dbReference>
<dbReference type="EMBL" id="AF057159">
    <property type="protein sequence ID" value="AAD19279.1"/>
    <property type="molecule type" value="Genomic_DNA"/>
</dbReference>
<dbReference type="EMBL" id="U68063">
    <property type="protein sequence ID" value="AAB08701.1"/>
    <property type="molecule type" value="mRNA"/>
</dbReference>
<dbReference type="EMBL" id="AK301118">
    <property type="protein sequence ID" value="BAG62714.1"/>
    <property type="molecule type" value="mRNA"/>
</dbReference>
<dbReference type="EMBL" id="CH471052">
    <property type="protein sequence ID" value="EAW78204.1"/>
    <property type="molecule type" value="Genomic_DNA"/>
</dbReference>
<dbReference type="EMBL" id="CH471052">
    <property type="protein sequence ID" value="EAW78205.1"/>
    <property type="molecule type" value="Genomic_DNA"/>
</dbReference>
<dbReference type="EMBL" id="CH471052">
    <property type="protein sequence ID" value="EAW78208.1"/>
    <property type="molecule type" value="Genomic_DNA"/>
</dbReference>
<dbReference type="EMBL" id="BC000160">
    <property type="protein sequence ID" value="AAH00160.1"/>
    <property type="molecule type" value="mRNA"/>
</dbReference>
<dbReference type="EMBL" id="BC000451">
    <property type="protein sequence ID" value="AAH00451.1"/>
    <property type="molecule type" value="mRNA"/>
</dbReference>
<dbReference type="EMBL" id="BC005898">
    <property type="protein sequence ID" value="AAH05898.1"/>
    <property type="molecule type" value="mRNA"/>
</dbReference>
<dbReference type="CCDS" id="CCDS33905.1"/>
<dbReference type="CCDS" id="CCDS58872.1">
    <molecule id="P62995-3"/>
</dbReference>
<dbReference type="RefSeq" id="NP_001230808.1">
    <molecule id="P62995-3"/>
    <property type="nucleotide sequence ID" value="NM_001243879.2"/>
</dbReference>
<dbReference type="RefSeq" id="NP_004584.1">
    <molecule id="P62995-1"/>
    <property type="nucleotide sequence ID" value="NM_004593.3"/>
</dbReference>
<dbReference type="RefSeq" id="XP_005247760.1">
    <property type="nucleotide sequence ID" value="XM_005247703.1"/>
</dbReference>
<dbReference type="RefSeq" id="XP_011511374.1">
    <property type="nucleotide sequence ID" value="XM_011513072.2"/>
</dbReference>
<dbReference type="RefSeq" id="XP_016862522.1">
    <property type="nucleotide sequence ID" value="XM_017007033.1"/>
</dbReference>
<dbReference type="RefSeq" id="XP_047304673.1">
    <molecule id="P62995-3"/>
    <property type="nucleotide sequence ID" value="XM_047448717.1"/>
</dbReference>
<dbReference type="RefSeq" id="XP_054203513.1">
    <molecule id="P62995-3"/>
    <property type="nucleotide sequence ID" value="XM_054347538.1"/>
</dbReference>
<dbReference type="PDB" id="2CQC">
    <property type="method" value="NMR"/>
    <property type="chains" value="A=110-191"/>
</dbReference>
<dbReference type="PDB" id="2KXN">
    <property type="method" value="NMR"/>
    <property type="chains" value="B=106-200"/>
</dbReference>
<dbReference type="PDB" id="2RRA">
    <property type="method" value="NMR"/>
    <property type="chains" value="A=109-201"/>
</dbReference>
<dbReference type="PDB" id="2RRB">
    <property type="method" value="NMR"/>
    <property type="chains" value="A=111-201"/>
</dbReference>
<dbReference type="PDBsum" id="2CQC"/>
<dbReference type="PDBsum" id="2KXN"/>
<dbReference type="PDBsum" id="2RRA"/>
<dbReference type="PDBsum" id="2RRB"/>
<dbReference type="BMRB" id="P62995"/>
<dbReference type="SMR" id="P62995"/>
<dbReference type="BioGRID" id="112332">
    <property type="interactions" value="458"/>
</dbReference>
<dbReference type="CORUM" id="P62995"/>
<dbReference type="DIP" id="DIP-42278N"/>
<dbReference type="FunCoup" id="P62995">
    <property type="interactions" value="3898"/>
</dbReference>
<dbReference type="IntAct" id="P62995">
    <property type="interactions" value="119"/>
</dbReference>
<dbReference type="MINT" id="P62995"/>
<dbReference type="STRING" id="9606.ENSP00000416959"/>
<dbReference type="GlyGen" id="P62995">
    <property type="glycosylation" value="2 sites, 1 O-linked glycan (1 site)"/>
</dbReference>
<dbReference type="iPTMnet" id="P62995"/>
<dbReference type="PhosphoSitePlus" id="P62995"/>
<dbReference type="SwissPalm" id="P62995"/>
<dbReference type="BioMuta" id="TRA2B"/>
<dbReference type="DMDM" id="51703330"/>
<dbReference type="jPOST" id="P62995"/>
<dbReference type="MassIVE" id="P62995"/>
<dbReference type="PaxDb" id="9606-ENSP00000416959"/>
<dbReference type="PeptideAtlas" id="P62995"/>
<dbReference type="ProteomicsDB" id="57464"/>
<dbReference type="ProteomicsDB" id="57465">
    <molecule id="P62995-2"/>
</dbReference>
<dbReference type="ProteomicsDB" id="57466">
    <molecule id="P62995-3"/>
</dbReference>
<dbReference type="Pumba" id="P62995"/>
<dbReference type="Antibodypedia" id="3190">
    <property type="antibodies" value="173 antibodies from 26 providers"/>
</dbReference>
<dbReference type="DNASU" id="6434"/>
<dbReference type="Ensembl" id="ENST00000382191.4">
    <molecule id="P62995-3"/>
    <property type="protein sequence ID" value="ENSP00000371626.4"/>
    <property type="gene ID" value="ENSG00000136527.19"/>
</dbReference>
<dbReference type="Ensembl" id="ENST00000453386.7">
    <molecule id="P62995-1"/>
    <property type="protein sequence ID" value="ENSP00000416959.2"/>
    <property type="gene ID" value="ENSG00000136527.19"/>
</dbReference>
<dbReference type="Ensembl" id="ENST00000456380.5">
    <molecule id="P62995-2"/>
    <property type="protein sequence ID" value="ENSP00000416887.1"/>
    <property type="gene ID" value="ENSG00000136527.19"/>
</dbReference>
<dbReference type="GeneID" id="6434"/>
<dbReference type="KEGG" id="hsa:6434"/>
<dbReference type="MANE-Select" id="ENST00000453386.7">
    <property type="protein sequence ID" value="ENSP00000416959.2"/>
    <property type="RefSeq nucleotide sequence ID" value="NM_004593.3"/>
    <property type="RefSeq protein sequence ID" value="NP_004584.1"/>
</dbReference>
<dbReference type="UCSC" id="uc003fpv.4">
    <property type="organism name" value="human"/>
</dbReference>
<dbReference type="AGR" id="HGNC:10781"/>
<dbReference type="CTD" id="6434"/>
<dbReference type="DisGeNET" id="6434"/>
<dbReference type="GeneCards" id="TRA2B"/>
<dbReference type="HGNC" id="HGNC:10781">
    <property type="gene designation" value="TRA2B"/>
</dbReference>
<dbReference type="HPA" id="ENSG00000136527">
    <property type="expression patterns" value="Low tissue specificity"/>
</dbReference>
<dbReference type="MalaCards" id="TRA2B"/>
<dbReference type="MIM" id="602719">
    <property type="type" value="gene"/>
</dbReference>
<dbReference type="neXtProt" id="NX_P62995"/>
<dbReference type="OpenTargets" id="ENSG00000136527"/>
<dbReference type="PharmGKB" id="PA35697"/>
<dbReference type="VEuPathDB" id="HostDB:ENSG00000136527"/>
<dbReference type="eggNOG" id="KOG0118">
    <property type="taxonomic scope" value="Eukaryota"/>
</dbReference>
<dbReference type="GeneTree" id="ENSGT00950000183009"/>
<dbReference type="HOGENOM" id="CLU_050438_3_0_1"/>
<dbReference type="InParanoid" id="P62995"/>
<dbReference type="OMA" id="RAKEECQ"/>
<dbReference type="OrthoDB" id="439808at2759"/>
<dbReference type="PAN-GO" id="P62995">
    <property type="GO annotations" value="3 GO annotations based on evolutionary models"/>
</dbReference>
<dbReference type="PhylomeDB" id="P62995"/>
<dbReference type="TreeFam" id="TF106265"/>
<dbReference type="PathwayCommons" id="P62995"/>
<dbReference type="Reactome" id="R-HSA-72163">
    <property type="pathway name" value="mRNA Splicing - Major Pathway"/>
</dbReference>
<dbReference type="Reactome" id="R-HSA-72203">
    <property type="pathway name" value="Processing of Capped Intron-Containing Pre-mRNA"/>
</dbReference>
<dbReference type="Reactome" id="R-HSA-9013418">
    <property type="pathway name" value="RHOBTB2 GTPase cycle"/>
</dbReference>
<dbReference type="Reactome" id="R-HSA-9013422">
    <property type="pathway name" value="RHOBTB1 GTPase cycle"/>
</dbReference>
<dbReference type="SignaLink" id="P62995"/>
<dbReference type="SIGNOR" id="P62995"/>
<dbReference type="BioGRID-ORCS" id="6434">
    <property type="hits" value="429 hits in 1186 CRISPR screens"/>
</dbReference>
<dbReference type="CD-CODE" id="232F8A39">
    <property type="entry name" value="P-body"/>
</dbReference>
<dbReference type="CD-CODE" id="318A8771">
    <property type="entry name" value="Synthetic Condensate 000319"/>
</dbReference>
<dbReference type="CD-CODE" id="804901D1">
    <property type="entry name" value="Nuclear speckle"/>
</dbReference>
<dbReference type="CD-CODE" id="91857CE7">
    <property type="entry name" value="Nucleolus"/>
</dbReference>
<dbReference type="CD-CODE" id="DEE660B4">
    <property type="entry name" value="Stress granule"/>
</dbReference>
<dbReference type="ChiTaRS" id="TRA2B">
    <property type="organism name" value="human"/>
</dbReference>
<dbReference type="EvolutionaryTrace" id="P62995"/>
<dbReference type="GeneWiki" id="TRA2B"/>
<dbReference type="GenomeRNAi" id="6434"/>
<dbReference type="Pharos" id="P62995">
    <property type="development level" value="Tbio"/>
</dbReference>
<dbReference type="PRO" id="PR:P62995"/>
<dbReference type="Proteomes" id="UP000005640">
    <property type="component" value="Chromosome 3"/>
</dbReference>
<dbReference type="RNAct" id="P62995">
    <property type="molecule type" value="protein"/>
</dbReference>
<dbReference type="Bgee" id="ENSG00000136527">
    <property type="expression patterns" value="Expressed in germinal epithelium of ovary and 215 other cell types or tissues"/>
</dbReference>
<dbReference type="ExpressionAtlas" id="P62995">
    <property type="expression patterns" value="baseline and differential"/>
</dbReference>
<dbReference type="GO" id="GO:0005637">
    <property type="term" value="C:nuclear inner membrane"/>
    <property type="evidence" value="ECO:0007669"/>
    <property type="project" value="Ensembl"/>
</dbReference>
<dbReference type="GO" id="GO:0005654">
    <property type="term" value="C:nucleoplasm"/>
    <property type="evidence" value="ECO:0000314"/>
    <property type="project" value="HPA"/>
</dbReference>
<dbReference type="GO" id="GO:0005634">
    <property type="term" value="C:nucleus"/>
    <property type="evidence" value="ECO:0000314"/>
    <property type="project" value="UniProtKB"/>
</dbReference>
<dbReference type="GO" id="GO:0032991">
    <property type="term" value="C:protein-containing complex"/>
    <property type="evidence" value="ECO:0000314"/>
    <property type="project" value="UniProtKB"/>
</dbReference>
<dbReference type="GO" id="GO:0005681">
    <property type="term" value="C:spliceosomal complex"/>
    <property type="evidence" value="ECO:0000315"/>
    <property type="project" value="CAFA"/>
</dbReference>
<dbReference type="GO" id="GO:0042802">
    <property type="term" value="F:identical protein binding"/>
    <property type="evidence" value="ECO:0000314"/>
    <property type="project" value="UniProtKB"/>
</dbReference>
<dbReference type="GO" id="GO:0003729">
    <property type="term" value="F:mRNA binding"/>
    <property type="evidence" value="ECO:0000314"/>
    <property type="project" value="UniProtKB"/>
</dbReference>
<dbReference type="GO" id="GO:0036002">
    <property type="term" value="F:pre-mRNA binding"/>
    <property type="evidence" value="ECO:0000314"/>
    <property type="project" value="CAFA"/>
</dbReference>
<dbReference type="GO" id="GO:0019904">
    <property type="term" value="F:protein domain specific binding"/>
    <property type="evidence" value="ECO:0000353"/>
    <property type="project" value="UniProtKB"/>
</dbReference>
<dbReference type="GO" id="GO:0003723">
    <property type="term" value="F:RNA binding"/>
    <property type="evidence" value="ECO:0000315"/>
    <property type="project" value="UniProtKB"/>
</dbReference>
<dbReference type="GO" id="GO:0071333">
    <property type="term" value="P:cellular response to glucose stimulus"/>
    <property type="evidence" value="ECO:0000315"/>
    <property type="project" value="CAFA"/>
</dbReference>
<dbReference type="GO" id="GO:0021796">
    <property type="term" value="P:cerebral cortex regionalization"/>
    <property type="evidence" value="ECO:0007669"/>
    <property type="project" value="Ensembl"/>
</dbReference>
<dbReference type="GO" id="GO:1990403">
    <property type="term" value="P:embryonic brain development"/>
    <property type="evidence" value="ECO:0007669"/>
    <property type="project" value="Ensembl"/>
</dbReference>
<dbReference type="GO" id="GO:0000398">
    <property type="term" value="P:mRNA splicing, via spliceosome"/>
    <property type="evidence" value="ECO:0000314"/>
    <property type="project" value="UniProtKB"/>
</dbReference>
<dbReference type="GO" id="GO:0048026">
    <property type="term" value="P:positive regulation of mRNA splicing, via spliceosome"/>
    <property type="evidence" value="ECO:0000314"/>
    <property type="project" value="UniProtKB"/>
</dbReference>
<dbReference type="GO" id="GO:0000381">
    <property type="term" value="P:regulation of alternative mRNA splicing, via spliceosome"/>
    <property type="evidence" value="ECO:0000314"/>
    <property type="project" value="UniProtKB"/>
</dbReference>
<dbReference type="GO" id="GO:0043484">
    <property type="term" value="P:regulation of RNA splicing"/>
    <property type="evidence" value="ECO:0000315"/>
    <property type="project" value="UniProtKB"/>
</dbReference>
<dbReference type="GO" id="GO:0000375">
    <property type="term" value="P:RNA splicing, via transesterification reactions"/>
    <property type="evidence" value="ECO:0000304"/>
    <property type="project" value="UniProtKB"/>
</dbReference>
<dbReference type="CDD" id="cd12363">
    <property type="entry name" value="RRM_TRA2"/>
    <property type="match status" value="1"/>
</dbReference>
<dbReference type="FunFam" id="3.30.70.330:FF:000160">
    <property type="entry name" value="Transformer-2 protein homolog beta"/>
    <property type="match status" value="1"/>
</dbReference>
<dbReference type="Gene3D" id="3.30.70.330">
    <property type="match status" value="1"/>
</dbReference>
<dbReference type="InterPro" id="IPR012677">
    <property type="entry name" value="Nucleotide-bd_a/b_plait_sf"/>
</dbReference>
<dbReference type="InterPro" id="IPR035979">
    <property type="entry name" value="RBD_domain_sf"/>
</dbReference>
<dbReference type="InterPro" id="IPR050441">
    <property type="entry name" value="RBM"/>
</dbReference>
<dbReference type="InterPro" id="IPR000504">
    <property type="entry name" value="RRM_dom"/>
</dbReference>
<dbReference type="PANTHER" id="PTHR48034">
    <property type="entry name" value="TRANSFORMER-2 SEX-DETERMINING PROTEIN-RELATED"/>
    <property type="match status" value="1"/>
</dbReference>
<dbReference type="Pfam" id="PF00076">
    <property type="entry name" value="RRM_1"/>
    <property type="match status" value="1"/>
</dbReference>
<dbReference type="SMART" id="SM00360">
    <property type="entry name" value="RRM"/>
    <property type="match status" value="1"/>
</dbReference>
<dbReference type="SUPFAM" id="SSF54928">
    <property type="entry name" value="RNA-binding domain, RBD"/>
    <property type="match status" value="1"/>
</dbReference>
<dbReference type="PROSITE" id="PS50102">
    <property type="entry name" value="RRM"/>
    <property type="match status" value="1"/>
</dbReference>
<feature type="initiator methionine" description="Removed" evidence="24 25 26">
    <location>
        <position position="1"/>
    </location>
</feature>
<feature type="chain" id="PRO_0000081983" description="Transformer-2 protein homolog beta">
    <location>
        <begin position="2"/>
        <end position="288"/>
    </location>
</feature>
<feature type="domain" description="RRM" evidence="3">
    <location>
        <begin position="118"/>
        <end position="196"/>
    </location>
</feature>
<feature type="region of interest" description="Disordered" evidence="4">
    <location>
        <begin position="1"/>
        <end position="114"/>
    </location>
</feature>
<feature type="region of interest" description="Linker">
    <location>
        <begin position="193"/>
        <end position="230"/>
    </location>
</feature>
<feature type="region of interest" description="Disordered" evidence="4">
    <location>
        <begin position="196"/>
        <end position="225"/>
    </location>
</feature>
<feature type="region of interest" description="Disordered" evidence="4">
    <location>
        <begin position="242"/>
        <end position="288"/>
    </location>
</feature>
<feature type="compositionally biased region" description="Low complexity" evidence="4">
    <location>
        <begin position="17"/>
        <end position="28"/>
    </location>
</feature>
<feature type="compositionally biased region" description="Basic residues" evidence="4">
    <location>
        <begin position="59"/>
        <end position="109"/>
    </location>
</feature>
<feature type="compositionally biased region" description="Basic residues" evidence="4">
    <location>
        <begin position="274"/>
        <end position="288"/>
    </location>
</feature>
<feature type="modified residue" description="N-acetylserine" evidence="24 25 26">
    <location>
        <position position="2"/>
    </location>
</feature>
<feature type="modified residue" description="Phosphoserine" evidence="24 25 27">
    <location>
        <position position="2"/>
    </location>
</feature>
<feature type="modified residue" description="Phosphoserine" evidence="25">
    <location>
        <position position="4"/>
    </location>
</feature>
<feature type="modified residue" description="Phosphoserine" evidence="24 25 27">
    <location>
        <position position="14"/>
    </location>
</feature>
<feature type="modified residue" description="Phosphoserine" evidence="2">
    <location>
        <position position="29"/>
    </location>
</feature>
<feature type="modified residue" description="Phosphothreonine" evidence="2">
    <location>
        <position position="33"/>
    </location>
</feature>
<feature type="modified residue" description="Phosphoserine" evidence="23 27">
    <location>
        <position position="83"/>
    </location>
</feature>
<feature type="modified residue" description="Phosphoserine" evidence="27">
    <location>
        <position position="85"/>
    </location>
</feature>
<feature type="modified residue" description="Phosphoserine" evidence="27">
    <location>
        <position position="87"/>
    </location>
</feature>
<feature type="modified residue" description="Phosphoserine" evidence="24">
    <location>
        <position position="95"/>
    </location>
</feature>
<feature type="modified residue" description="Phosphoserine" evidence="24">
    <location>
        <position position="97"/>
    </location>
</feature>
<feature type="modified residue" description="Phosphoserine" evidence="24">
    <location>
        <position position="99"/>
    </location>
</feature>
<feature type="modified residue" description="Phosphothreonine" evidence="24">
    <location>
        <position position="103"/>
    </location>
</feature>
<feature type="modified residue" description="Phosphothreonine" evidence="23 24 25 27">
    <location>
        <position position="201"/>
    </location>
</feature>
<feature type="modified residue" description="Phosphothreonine" evidence="24">
    <location>
        <position position="203"/>
    </location>
</feature>
<feature type="modified residue" description="Phosphoserine" evidence="27">
    <location>
        <position position="215"/>
    </location>
</feature>
<feature type="modified residue" description="Phosphoserine" evidence="27">
    <location>
        <position position="237"/>
    </location>
</feature>
<feature type="modified residue" description="Asymmetric dimethylarginine; alternate" evidence="28">
    <location>
        <position position="241"/>
    </location>
</feature>
<feature type="modified residue" description="Dimethylated arginine; alternate" evidence="17 22">
    <location>
        <position position="241"/>
    </location>
</feature>
<feature type="modified residue" description="Omega-N-methylarginine; alternate" evidence="28">
    <location>
        <position position="241"/>
    </location>
</feature>
<feature type="cross-link" description="Glycyl lysine isopeptide (Lys-Gly) (interchain with G-Cter in SUMO2)" evidence="29">
    <location>
        <position position="197"/>
    </location>
</feature>
<feature type="splice variant" id="VSP_005896" description="In isoform 3." evidence="18">
    <location>
        <begin position="1"/>
        <end position="100"/>
    </location>
</feature>
<feature type="splice variant" id="VSP_005898" description="In isoform 2." evidence="19">
    <original>ESRSASRSGSAHGSGKSARHTPARSR</original>
    <variation>VNVEEGKCGSRHLTSFINEYLKLRNK</variation>
    <location>
        <begin position="13"/>
        <end position="38"/>
    </location>
</feature>
<feature type="splice variant" id="VSP_005899" description="In isoform 2." evidence="19">
    <location>
        <begin position="39"/>
        <end position="288"/>
    </location>
</feature>
<feature type="helix" evidence="30">
    <location>
        <begin position="116"/>
        <end position="118"/>
    </location>
</feature>
<feature type="strand" evidence="30">
    <location>
        <begin position="120"/>
        <end position="124"/>
    </location>
</feature>
<feature type="helix" evidence="30">
    <location>
        <begin position="131"/>
        <end position="139"/>
    </location>
</feature>
<feature type="strand" evidence="30">
    <location>
        <begin position="144"/>
        <end position="151"/>
    </location>
</feature>
<feature type="strand" evidence="30">
    <location>
        <begin position="153"/>
        <end position="168"/>
    </location>
</feature>
<feature type="helix" evidence="30">
    <location>
        <begin position="169"/>
        <end position="179"/>
    </location>
</feature>
<feature type="strand" evidence="30">
    <location>
        <begin position="182"/>
        <end position="184"/>
    </location>
</feature>
<feature type="strand" evidence="30">
    <location>
        <begin position="187"/>
        <end position="191"/>
    </location>
</feature>
<feature type="strand" evidence="31">
    <location>
        <begin position="195"/>
        <end position="198"/>
    </location>
</feature>
<accession>P62995</accession>
<accession>B4DVK2</accession>
<accession>D3DNU3</accession>
<accession>O15449</accession>
<accession>Q15815</accession>
<accession>Q64283</accession>
<comment type="function">
    <text evidence="7 8 11 15">Sequence-specific RNA-binding protein which participates in the control of pre-mRNA splicing. Can either activate or suppress exon inclusion. Acts additively with RBMX to promote exon 7 inclusion of the survival motor neuron SMN2. Activates the splicing of MAPT/Tau exon 10. Alters pre-mRNA splicing patterns by antagonizing the effects of splicing regulators, like RBMX. Binds to the AG-rich SE2 domain in the SMN exon 7 RNA. Binds to pre-mRNA.</text>
</comment>
<comment type="subunit">
    <text evidence="1 2 5 6 7 9 10 12 13">Found in a pre-mRNA exonic splicing enhancer (ESE) complex with TRA2B/SFRS10, SNRNP70, SNRPA1 and SRRM1 (PubMed:10339552). Binds to A3 enhancer proteins SFRS4, SFRS5, SFRS6 and SFRS9. Interacts with CPSF6, RBMY1A1, RBMX, RNPS1 and phosphorylated SFRS13A (PubMed:10749975, PubMed:12165565, PubMed:14729963, PubMed:14765198, PubMed:15169763, PubMed:19282290). Interacts with SAFB/SAFB1 (By similarity). Interacts with ILDR1 (via C-terminus) and ILDR2 (By similarity).</text>
</comment>
<comment type="interaction">
    <interactant intactId="EBI-725485">
        <id>P62995</id>
    </interactant>
    <interactant intactId="EBI-11981867">
        <id>P49759-3</id>
        <label>CLK1</label>
    </interactant>
    <organismsDiffer>false</organismsDiffer>
    <experiments>5</experiments>
</comment>
<comment type="interaction">
    <interactant intactId="EBI-725485">
        <id>P62995</id>
    </interactant>
    <interactant intactId="EBI-745579">
        <id>P49761</id>
        <label>CLK3</label>
    </interactant>
    <organismsDiffer>false</organismsDiffer>
    <experiments>10</experiments>
</comment>
<comment type="interaction">
    <interactant intactId="EBI-725485">
        <id>P62995</id>
    </interactant>
    <interactant intactId="EBI-6255981">
        <id>Q7L775</id>
        <label>EPM2AIP1</label>
    </interactant>
    <organismsDiffer>false</organismsDiffer>
    <experiments>3</experiments>
</comment>
<comment type="interaction">
    <interactant intactId="EBI-725485">
        <id>P62995</id>
    </interactant>
    <interactant intactId="EBI-746778">
        <id>Q96A72</id>
        <label>MAGOHB</label>
    </interactant>
    <organismsDiffer>false</organismsDiffer>
    <experiments>3</experiments>
</comment>
<comment type="interaction">
    <interactant intactId="EBI-725485">
        <id>P62995</id>
    </interactant>
    <interactant intactId="EBI-2858213">
        <id>Q86VE0</id>
        <label>MYPOP</label>
    </interactant>
    <organismsDiffer>false</organismsDiffer>
    <experiments>3</experiments>
</comment>
<comment type="interaction">
    <interactant intactId="EBI-725485">
        <id>P62995</id>
    </interactant>
    <interactant intactId="EBI-10329013">
        <id>Q9Y5E9</id>
        <label>PCDHB14</label>
    </interactant>
    <organismsDiffer>false</organismsDiffer>
    <experiments>3</experiments>
</comment>
<comment type="interaction">
    <interactant intactId="EBI-725485">
        <id>P62995</id>
    </interactant>
    <interactant intactId="EBI-743526">
        <id>P38159</id>
        <label>RBMX</label>
    </interactant>
    <organismsDiffer>false</organismsDiffer>
    <experiments>4</experiments>
</comment>
<comment type="interaction">
    <interactant intactId="EBI-725485">
        <id>P62995</id>
    </interactant>
    <interactant intactId="EBI-8642021">
        <id>Q15415</id>
        <label>RBMY1J</label>
    </interactant>
    <organismsDiffer>false</organismsDiffer>
    <experiments>3</experiments>
</comment>
<comment type="interaction">
    <interactant intactId="EBI-725485">
        <id>P62995</id>
    </interactant>
    <interactant intactId="EBI-2462271">
        <id>Q15428</id>
        <label>SF3A2</label>
    </interactant>
    <organismsDiffer>false</organismsDiffer>
    <experiments>2</experiments>
</comment>
<comment type="interaction">
    <interactant intactId="EBI-725485">
        <id>P62995</id>
    </interactant>
    <interactant intactId="EBI-593303">
        <id>P78362</id>
        <label>SRPK2</label>
    </interactant>
    <organismsDiffer>false</organismsDiffer>
    <experiments>5</experiments>
</comment>
<comment type="interaction">
    <interactant intactId="EBI-725485">
        <id>P62995</id>
    </interactant>
    <interactant intactId="EBI-398920">
        <id>Q07955</id>
        <label>SRSF1</label>
    </interactant>
    <organismsDiffer>false</organismsDiffer>
    <experiments>3</experiments>
</comment>
<comment type="interaction">
    <interactant intactId="EBI-725485">
        <id>P62995</id>
    </interactant>
    <interactant intactId="EBI-722621">
        <id>Q08170</id>
        <label>SRSF4</label>
    </interactant>
    <organismsDiffer>false</organismsDiffer>
    <experiments>4</experiments>
</comment>
<comment type="interaction">
    <interactant intactId="EBI-725485">
        <id>P62995</id>
    </interactant>
    <interactant intactId="EBI-10976394">
        <id>Q9BRL6-2</id>
        <label>SRSF8</label>
    </interactant>
    <organismsDiffer>false</organismsDiffer>
    <experiments>3</experiments>
</comment>
<comment type="interaction">
    <interactant intactId="EBI-725485">
        <id>P62995</id>
    </interactant>
    <interactant intactId="EBI-2949710">
        <id>Q13242</id>
        <label>SRSF9</label>
    </interactant>
    <organismsDiffer>false</organismsDiffer>
    <experiments>3</experiments>
</comment>
<comment type="interaction">
    <interactant intactId="EBI-725485">
        <id>P62995</id>
    </interactant>
    <interactant intactId="EBI-725485">
        <id>P62995</id>
        <label>TRA2B</label>
    </interactant>
    <organismsDiffer>false</organismsDiffer>
    <experiments>3</experiments>
</comment>
<comment type="interaction">
    <interactant intactId="EBI-725485">
        <id>P62995</id>
    </interactant>
    <interactant intactId="EBI-632461">
        <id>Q01081</id>
        <label>U2AF1</label>
    </interactant>
    <organismsDiffer>false</organismsDiffer>
    <experiments>3</experiments>
</comment>
<comment type="interaction">
    <interactant intactId="EBI-725485">
        <id>P62995</id>
    </interactant>
    <interactant intactId="EBI-2849854">
        <id>Q96MU7</id>
        <label>YTHDC1</label>
    </interactant>
    <organismsDiffer>false</organismsDiffer>
    <experiments>4</experiments>
</comment>
<comment type="subcellular location">
    <subcellularLocation>
        <location evidence="14 15">Nucleus</location>
    </subcellularLocation>
</comment>
<comment type="alternative products">
    <event type="alternative splicing"/>
    <isoform>
        <id>P62995-1</id>
        <id>Q15815-1</id>
        <name>1</name>
        <name>HTRA2-beta1</name>
        <sequence type="displayed"/>
    </isoform>
    <isoform>
        <id>P62995-2</id>
        <id>Q15815-2</id>
        <name>2</name>
        <name>HTRA2-beta2</name>
        <sequence type="described" ref="VSP_005898 VSP_005899"/>
    </isoform>
    <isoform>
        <id>P62995-3</id>
        <id>Q15815-3</id>
        <name>3</name>
        <name>HTRA2-beta3</name>
        <sequence type="described" ref="VSP_005896"/>
    </isoform>
</comment>
<comment type="tissue specificity">
    <text evidence="16">Highest expression in heart, skeletal muscle and pancreas. Less abundant in kidney, placenta and brain. Lowest expression in kidney and liver.</text>
</comment>
<comment type="PTM">
    <text evidence="15">Phosphorylated in the RS domains.</text>
</comment>
<comment type="PTM">
    <text>Dimethylation at Arg-241 is probably asymmetric.</text>
</comment>
<comment type="similarity">
    <text evidence="20">Belongs to the splicing factor SR family.</text>
</comment>
<name>TRA2B_HUMAN</name>
<evidence type="ECO:0000250" key="1">
    <source>
        <dbReference type="UniProtKB" id="P62996"/>
    </source>
</evidence>
<evidence type="ECO:0000250" key="2">
    <source>
        <dbReference type="UniProtKB" id="P62997"/>
    </source>
</evidence>
<evidence type="ECO:0000255" key="3">
    <source>
        <dbReference type="PROSITE-ProRule" id="PRU00176"/>
    </source>
</evidence>
<evidence type="ECO:0000256" key="4">
    <source>
        <dbReference type="SAM" id="MobiDB-lite"/>
    </source>
</evidence>
<evidence type="ECO:0000269" key="5">
    <source>
    </source>
</evidence>
<evidence type="ECO:0000269" key="6">
    <source>
    </source>
</evidence>
<evidence type="ECO:0000269" key="7">
    <source>
    </source>
</evidence>
<evidence type="ECO:0000269" key="8">
    <source>
    </source>
</evidence>
<evidence type="ECO:0000269" key="9">
    <source>
    </source>
</evidence>
<evidence type="ECO:0000269" key="10">
    <source>
    </source>
</evidence>
<evidence type="ECO:0000269" key="11">
    <source>
    </source>
</evidence>
<evidence type="ECO:0000269" key="12">
    <source>
    </source>
</evidence>
<evidence type="ECO:0000269" key="13">
    <source>
    </source>
</evidence>
<evidence type="ECO:0000269" key="14">
    <source>
    </source>
</evidence>
<evidence type="ECO:0000269" key="15">
    <source>
    </source>
</evidence>
<evidence type="ECO:0000269" key="16">
    <source>
    </source>
</evidence>
<evidence type="ECO:0000269" key="17">
    <source ref="7"/>
</evidence>
<evidence type="ECO:0000303" key="18">
    <source>
    </source>
</evidence>
<evidence type="ECO:0000303" key="19">
    <source>
    </source>
</evidence>
<evidence type="ECO:0000305" key="20"/>
<evidence type="ECO:0000312" key="21">
    <source>
        <dbReference type="HGNC" id="HGNC:10781"/>
    </source>
</evidence>
<evidence type="ECO:0007744" key="22">
    <source>
    </source>
</evidence>
<evidence type="ECO:0007744" key="23">
    <source>
    </source>
</evidence>
<evidence type="ECO:0007744" key="24">
    <source>
    </source>
</evidence>
<evidence type="ECO:0007744" key="25">
    <source>
    </source>
</evidence>
<evidence type="ECO:0007744" key="26">
    <source>
    </source>
</evidence>
<evidence type="ECO:0007744" key="27">
    <source>
    </source>
</evidence>
<evidence type="ECO:0007744" key="28">
    <source>
    </source>
</evidence>
<evidence type="ECO:0007744" key="29">
    <source>
    </source>
</evidence>
<evidence type="ECO:0007829" key="30">
    <source>
        <dbReference type="PDB" id="2CQC"/>
    </source>
</evidence>
<evidence type="ECO:0007829" key="31">
    <source>
        <dbReference type="PDB" id="2KXN"/>
    </source>
</evidence>